<proteinExistence type="inferred from homology"/>
<comment type="function">
    <text evidence="1">Catalyzes the attachment of valine to tRNA(Val). As ValRS can inadvertently accommodate and process structurally similar amino acids such as threonine, to avoid such errors, it has a 'posttransfer' editing activity that hydrolyzes mischarged Thr-tRNA(Val) in a tRNA-dependent manner.</text>
</comment>
<comment type="catalytic activity">
    <reaction evidence="1">
        <text>tRNA(Val) + L-valine + ATP = L-valyl-tRNA(Val) + AMP + diphosphate</text>
        <dbReference type="Rhea" id="RHEA:10704"/>
        <dbReference type="Rhea" id="RHEA-COMP:9672"/>
        <dbReference type="Rhea" id="RHEA-COMP:9708"/>
        <dbReference type="ChEBI" id="CHEBI:30616"/>
        <dbReference type="ChEBI" id="CHEBI:33019"/>
        <dbReference type="ChEBI" id="CHEBI:57762"/>
        <dbReference type="ChEBI" id="CHEBI:78442"/>
        <dbReference type="ChEBI" id="CHEBI:78537"/>
        <dbReference type="ChEBI" id="CHEBI:456215"/>
        <dbReference type="EC" id="6.1.1.9"/>
    </reaction>
</comment>
<comment type="subunit">
    <text evidence="1">Monomer.</text>
</comment>
<comment type="subcellular location">
    <subcellularLocation>
        <location evidence="1">Cytoplasm</location>
    </subcellularLocation>
</comment>
<comment type="domain">
    <text evidence="1">ValRS has two distinct active sites: one for aminoacylation and one for editing. The misactivated threonine is translocated from the active site to the editing site.</text>
</comment>
<comment type="domain">
    <text evidence="1">The C-terminal coiled-coil domain is crucial for aminoacylation activity.</text>
</comment>
<comment type="similarity">
    <text evidence="1">Belongs to the class-I aminoacyl-tRNA synthetase family. ValS type 1 subfamily.</text>
</comment>
<comment type="sequence caution" evidence="3">
    <conflict type="erroneous initiation">
        <sequence resource="EMBL-CDS" id="BAC19092"/>
    </conflict>
</comment>
<keyword id="KW-0030">Aminoacyl-tRNA synthetase</keyword>
<keyword id="KW-0067">ATP-binding</keyword>
<keyword id="KW-0175">Coiled coil</keyword>
<keyword id="KW-0963">Cytoplasm</keyword>
<keyword id="KW-0436">Ligase</keyword>
<keyword id="KW-0547">Nucleotide-binding</keyword>
<keyword id="KW-0648">Protein biosynthesis</keyword>
<keyword id="KW-1185">Reference proteome</keyword>
<dbReference type="EC" id="6.1.1.9" evidence="1"/>
<dbReference type="EMBL" id="BA000035">
    <property type="protein sequence ID" value="BAC19092.1"/>
    <property type="status" value="ALT_INIT"/>
    <property type="molecule type" value="Genomic_DNA"/>
</dbReference>
<dbReference type="RefSeq" id="WP_035108985.1">
    <property type="nucleotide sequence ID" value="NC_004369.1"/>
</dbReference>
<dbReference type="SMR" id="Q8FN65"/>
<dbReference type="STRING" id="196164.gene:10742713"/>
<dbReference type="KEGG" id="cef:CE2282"/>
<dbReference type="eggNOG" id="COG0525">
    <property type="taxonomic scope" value="Bacteria"/>
</dbReference>
<dbReference type="HOGENOM" id="CLU_001493_0_2_11"/>
<dbReference type="OrthoDB" id="9810365at2"/>
<dbReference type="Proteomes" id="UP000001409">
    <property type="component" value="Chromosome"/>
</dbReference>
<dbReference type="GO" id="GO:0005829">
    <property type="term" value="C:cytosol"/>
    <property type="evidence" value="ECO:0007669"/>
    <property type="project" value="TreeGrafter"/>
</dbReference>
<dbReference type="GO" id="GO:0002161">
    <property type="term" value="F:aminoacyl-tRNA deacylase activity"/>
    <property type="evidence" value="ECO:0007669"/>
    <property type="project" value="InterPro"/>
</dbReference>
<dbReference type="GO" id="GO:0005524">
    <property type="term" value="F:ATP binding"/>
    <property type="evidence" value="ECO:0007669"/>
    <property type="project" value="UniProtKB-UniRule"/>
</dbReference>
<dbReference type="GO" id="GO:0004832">
    <property type="term" value="F:valine-tRNA ligase activity"/>
    <property type="evidence" value="ECO:0007669"/>
    <property type="project" value="UniProtKB-UniRule"/>
</dbReference>
<dbReference type="GO" id="GO:0006438">
    <property type="term" value="P:valyl-tRNA aminoacylation"/>
    <property type="evidence" value="ECO:0007669"/>
    <property type="project" value="UniProtKB-UniRule"/>
</dbReference>
<dbReference type="CDD" id="cd07962">
    <property type="entry name" value="Anticodon_Ia_Val"/>
    <property type="match status" value="1"/>
</dbReference>
<dbReference type="CDD" id="cd00817">
    <property type="entry name" value="ValRS_core"/>
    <property type="match status" value="1"/>
</dbReference>
<dbReference type="FunFam" id="1.10.287.380:FF:000001">
    <property type="entry name" value="Valine--tRNA ligase"/>
    <property type="match status" value="1"/>
</dbReference>
<dbReference type="FunFam" id="3.40.50.620:FF:000032">
    <property type="entry name" value="Valine--tRNA ligase"/>
    <property type="match status" value="1"/>
</dbReference>
<dbReference type="FunFam" id="3.40.50.620:FF:000098">
    <property type="entry name" value="Valine--tRNA ligase"/>
    <property type="match status" value="1"/>
</dbReference>
<dbReference type="Gene3D" id="3.40.50.620">
    <property type="entry name" value="HUPs"/>
    <property type="match status" value="2"/>
</dbReference>
<dbReference type="Gene3D" id="1.10.730.10">
    <property type="entry name" value="Isoleucyl-tRNA Synthetase, Domain 1"/>
    <property type="match status" value="1"/>
</dbReference>
<dbReference type="Gene3D" id="1.10.287.380">
    <property type="entry name" value="Valyl-tRNA synthetase, C-terminal domain"/>
    <property type="match status" value="1"/>
</dbReference>
<dbReference type="HAMAP" id="MF_02004">
    <property type="entry name" value="Val_tRNA_synth_type1"/>
    <property type="match status" value="1"/>
</dbReference>
<dbReference type="InterPro" id="IPR001412">
    <property type="entry name" value="aa-tRNA-synth_I_CS"/>
</dbReference>
<dbReference type="InterPro" id="IPR002300">
    <property type="entry name" value="aa-tRNA-synth_Ia"/>
</dbReference>
<dbReference type="InterPro" id="IPR033705">
    <property type="entry name" value="Anticodon_Ia_Val"/>
</dbReference>
<dbReference type="InterPro" id="IPR013155">
    <property type="entry name" value="M/V/L/I-tRNA-synth_anticd-bd"/>
</dbReference>
<dbReference type="InterPro" id="IPR014729">
    <property type="entry name" value="Rossmann-like_a/b/a_fold"/>
</dbReference>
<dbReference type="InterPro" id="IPR010978">
    <property type="entry name" value="tRNA-bd_arm"/>
</dbReference>
<dbReference type="InterPro" id="IPR009080">
    <property type="entry name" value="tRNAsynth_Ia_anticodon-bd"/>
</dbReference>
<dbReference type="InterPro" id="IPR037118">
    <property type="entry name" value="Val-tRNA_synth_C_sf"/>
</dbReference>
<dbReference type="InterPro" id="IPR019499">
    <property type="entry name" value="Val-tRNA_synth_tRNA-bd"/>
</dbReference>
<dbReference type="InterPro" id="IPR009008">
    <property type="entry name" value="Val/Leu/Ile-tRNA-synth_edit"/>
</dbReference>
<dbReference type="InterPro" id="IPR002303">
    <property type="entry name" value="Valyl-tRNA_ligase"/>
</dbReference>
<dbReference type="NCBIfam" id="NF004349">
    <property type="entry name" value="PRK05729.1"/>
    <property type="match status" value="1"/>
</dbReference>
<dbReference type="NCBIfam" id="TIGR00422">
    <property type="entry name" value="valS"/>
    <property type="match status" value="1"/>
</dbReference>
<dbReference type="PANTHER" id="PTHR11946:SF93">
    <property type="entry name" value="VALINE--TRNA LIGASE, CHLOROPLASTIC_MITOCHONDRIAL 2"/>
    <property type="match status" value="1"/>
</dbReference>
<dbReference type="PANTHER" id="PTHR11946">
    <property type="entry name" value="VALYL-TRNA SYNTHETASES"/>
    <property type="match status" value="1"/>
</dbReference>
<dbReference type="Pfam" id="PF08264">
    <property type="entry name" value="Anticodon_1"/>
    <property type="match status" value="1"/>
</dbReference>
<dbReference type="Pfam" id="PF00133">
    <property type="entry name" value="tRNA-synt_1"/>
    <property type="match status" value="2"/>
</dbReference>
<dbReference type="Pfam" id="PF10458">
    <property type="entry name" value="Val_tRNA-synt_C"/>
    <property type="match status" value="1"/>
</dbReference>
<dbReference type="PRINTS" id="PR00986">
    <property type="entry name" value="TRNASYNTHVAL"/>
</dbReference>
<dbReference type="SUPFAM" id="SSF47323">
    <property type="entry name" value="Anticodon-binding domain of a subclass of class I aminoacyl-tRNA synthetases"/>
    <property type="match status" value="1"/>
</dbReference>
<dbReference type="SUPFAM" id="SSF52374">
    <property type="entry name" value="Nucleotidylyl transferase"/>
    <property type="match status" value="1"/>
</dbReference>
<dbReference type="SUPFAM" id="SSF46589">
    <property type="entry name" value="tRNA-binding arm"/>
    <property type="match status" value="1"/>
</dbReference>
<dbReference type="SUPFAM" id="SSF50677">
    <property type="entry name" value="ValRS/IleRS/LeuRS editing domain"/>
    <property type="match status" value="1"/>
</dbReference>
<dbReference type="PROSITE" id="PS00178">
    <property type="entry name" value="AA_TRNA_LIGASE_I"/>
    <property type="match status" value="1"/>
</dbReference>
<feature type="chain" id="PRO_0000224466" description="Valine--tRNA ligase">
    <location>
        <begin position="1"/>
        <end position="903"/>
    </location>
</feature>
<feature type="region of interest" description="Disordered" evidence="2">
    <location>
        <begin position="1"/>
        <end position="22"/>
    </location>
</feature>
<feature type="coiled-coil region" evidence="1">
    <location>
        <begin position="836"/>
        <end position="902"/>
    </location>
</feature>
<feature type="short sequence motif" description="'HIGH' region">
    <location>
        <begin position="61"/>
        <end position="71"/>
    </location>
</feature>
<feature type="short sequence motif" description="'KMSKS' region">
    <location>
        <begin position="552"/>
        <end position="556"/>
    </location>
</feature>
<feature type="compositionally biased region" description="Polar residues" evidence="2">
    <location>
        <begin position="1"/>
        <end position="15"/>
    </location>
</feature>
<feature type="binding site" evidence="1">
    <location>
        <position position="555"/>
    </location>
    <ligand>
        <name>ATP</name>
        <dbReference type="ChEBI" id="CHEBI:30616"/>
    </ligand>
</feature>
<gene>
    <name evidence="1" type="primary">valS</name>
    <name type="ordered locus">CE2282</name>
</gene>
<organism>
    <name type="scientific">Corynebacterium efficiens (strain DSM 44549 / YS-314 / AJ 12310 / JCM 11189 / NBRC 100395)</name>
    <dbReference type="NCBI Taxonomy" id="196164"/>
    <lineage>
        <taxon>Bacteria</taxon>
        <taxon>Bacillati</taxon>
        <taxon>Actinomycetota</taxon>
        <taxon>Actinomycetes</taxon>
        <taxon>Mycobacteriales</taxon>
        <taxon>Corynebacteriaceae</taxon>
        <taxon>Corynebacterium</taxon>
    </lineage>
</organism>
<name>SYV_COREF</name>
<reference key="1">
    <citation type="journal article" date="2003" name="Genome Res.">
        <title>Comparative complete genome sequence analysis of the amino acid replacements responsible for the thermostability of Corynebacterium efficiens.</title>
        <authorList>
            <person name="Nishio Y."/>
            <person name="Nakamura Y."/>
            <person name="Kawarabayasi Y."/>
            <person name="Usuda Y."/>
            <person name="Kimura E."/>
            <person name="Sugimoto S."/>
            <person name="Matsui K."/>
            <person name="Yamagishi A."/>
            <person name="Kikuchi H."/>
            <person name="Ikeo K."/>
            <person name="Gojobori T."/>
        </authorList>
    </citation>
    <scope>NUCLEOTIDE SEQUENCE [LARGE SCALE GENOMIC DNA]</scope>
    <source>
        <strain>DSM 44549 / YS-314 / AJ 12310 / JCM 11189 / NBRC 100395</strain>
    </source>
</reference>
<sequence length="903" mass="101684">MVCVTDQNNENPSQNRADKLPKSWDPKAVEADLYQGWVDAGYFTADPASEKPGYSIVLPPPNVTGQLHMGHALDHTLMDALARRKRMQGFEVLWLPGMDHAGIATQTKVEEMLKETEGKSRYDYSREEFIEKVWEWKKEYGGKIGEQMRAIGDSVDWSRERFTLDEGLSRAVQTIFKKLYDSGMIYQANRLVNWSPVLETAVSDIEVVYKDVEGELVSIRYGSLNDDEPHVVVATTRVETMLGDVAVAVHPDDERYRHLVGTTLPHPFRDDLTLKVVADDYVDPEFGSGAVKITPAHDPNDYALGLRHHLDMPTIMDKTGRIADTGTQFDGMTREEARVKVREALAEQGRIVKEVRPYVHSVGHSERSGEAIEPRLSLQWWVKVEELAKMSGDAVRAGDTTIHPKSLEPRYFDWVDDMHDWCISRQLWWGHRIPIWYGPDGDVICVGPDEQAPEGYTQDPDVLDTWFSSALWPFSTMGWPDKTPELDKFYPTSVLVTAYDILFFWVARMMMFGTFAAKETPELLGEGTDGRPQVPFTDLFLHGLVRDEHGRKMSKSLGNGIDPMDWVDNYGADALRFTLARGANPGVDLPVGEDSAQSSRNFATKLFNATRFALMNGAVSEGLPERAELTDADRWILDRLEEVRGHVDDYLDNYQFAKANEELYHFAWNEFCDWYLEIAKVQIPREGVTERGRNTQQVLGHVLDALLRLLHPAMPFVTEVLWKALTDGESIVTSSWPTPADTNGGAAVDADAARRIADVEKLVTEIRRFRSDQGVKPSQKVPARLDFAACDLTELEGAVRALVRIEEPAEDFEESASLEIRLSTATITVELDTSGTVDVAAERKRLEKDLATANKELETTGKKLGNEAFLAKAPDAVVEKIRGRQQVAREEVERITKRLEELG</sequence>
<evidence type="ECO:0000255" key="1">
    <source>
        <dbReference type="HAMAP-Rule" id="MF_02004"/>
    </source>
</evidence>
<evidence type="ECO:0000256" key="2">
    <source>
        <dbReference type="SAM" id="MobiDB-lite"/>
    </source>
</evidence>
<evidence type="ECO:0000305" key="3"/>
<protein>
    <recommendedName>
        <fullName evidence="1">Valine--tRNA ligase</fullName>
        <ecNumber evidence="1">6.1.1.9</ecNumber>
    </recommendedName>
    <alternativeName>
        <fullName evidence="1">Valyl-tRNA synthetase</fullName>
        <shortName evidence="1">ValRS</shortName>
    </alternativeName>
</protein>
<accession>Q8FN65</accession>